<comment type="function">
    <text evidence="1">Binds to the 50S ribosomal subunit and prevents its association with the 30S ribosomal subunit to form the 70S initiation complex.</text>
</comment>
<comment type="similarity">
    <text evidence="1">Belongs to the eIF-6 family.</text>
</comment>
<reference key="1">
    <citation type="journal article" date="2009" name="ISME J.">
        <title>The genome sequence of the psychrophilic archaeon, Methanococcoides burtonii: the role of genome evolution in cold adaptation.</title>
        <authorList>
            <person name="Allen M.A."/>
            <person name="Lauro F.M."/>
            <person name="Williams T.J."/>
            <person name="Burg D."/>
            <person name="Siddiqui K.S."/>
            <person name="De Francisci D."/>
            <person name="Chong K.W."/>
            <person name="Pilak O."/>
            <person name="Chew H.H."/>
            <person name="De Maere M.Z."/>
            <person name="Ting L."/>
            <person name="Katrib M."/>
            <person name="Ng C."/>
            <person name="Sowers K.R."/>
            <person name="Galperin M.Y."/>
            <person name="Anderson I.J."/>
            <person name="Ivanova N."/>
            <person name="Dalin E."/>
            <person name="Martinez M."/>
            <person name="Lapidus A."/>
            <person name="Hauser L."/>
            <person name="Land M."/>
            <person name="Thomas T."/>
            <person name="Cavicchioli R."/>
        </authorList>
    </citation>
    <scope>NUCLEOTIDE SEQUENCE [LARGE SCALE GENOMIC DNA]</scope>
    <source>
        <strain>DSM 6242 / NBRC 107633 / OCM 468 / ACE-M</strain>
    </source>
</reference>
<accession>Q12ZJ5</accession>
<dbReference type="EMBL" id="CP000300">
    <property type="protein sequence ID" value="ABE51131.1"/>
    <property type="molecule type" value="Genomic_DNA"/>
</dbReference>
<dbReference type="RefSeq" id="WP_011498295.1">
    <property type="nucleotide sequence ID" value="NC_007955.1"/>
</dbReference>
<dbReference type="SMR" id="Q12ZJ5"/>
<dbReference type="STRING" id="259564.Mbur_0113"/>
<dbReference type="GeneID" id="3998222"/>
<dbReference type="KEGG" id="mbu:Mbur_0113"/>
<dbReference type="HOGENOM" id="CLU_071894_1_0_2"/>
<dbReference type="OrthoDB" id="33582at2157"/>
<dbReference type="Proteomes" id="UP000001979">
    <property type="component" value="Chromosome"/>
</dbReference>
<dbReference type="GO" id="GO:0043022">
    <property type="term" value="F:ribosome binding"/>
    <property type="evidence" value="ECO:0007669"/>
    <property type="project" value="InterPro"/>
</dbReference>
<dbReference type="GO" id="GO:0003743">
    <property type="term" value="F:translation initiation factor activity"/>
    <property type="evidence" value="ECO:0007669"/>
    <property type="project" value="UniProtKB-UniRule"/>
</dbReference>
<dbReference type="GO" id="GO:0042256">
    <property type="term" value="P:cytosolic ribosome assembly"/>
    <property type="evidence" value="ECO:0007669"/>
    <property type="project" value="InterPro"/>
</dbReference>
<dbReference type="Gene3D" id="3.75.10.10">
    <property type="entry name" value="L-arginine/glycine Amidinotransferase, Chain A"/>
    <property type="match status" value="1"/>
</dbReference>
<dbReference type="HAMAP" id="MF_00032">
    <property type="entry name" value="eIF_6"/>
    <property type="match status" value="1"/>
</dbReference>
<dbReference type="InterPro" id="IPR002769">
    <property type="entry name" value="eIF6"/>
</dbReference>
<dbReference type="NCBIfam" id="TIGR00323">
    <property type="entry name" value="eIF-6"/>
    <property type="match status" value="1"/>
</dbReference>
<dbReference type="NCBIfam" id="NF003130">
    <property type="entry name" value="PRK04046.2-1"/>
    <property type="match status" value="1"/>
</dbReference>
<dbReference type="PANTHER" id="PTHR10784">
    <property type="entry name" value="TRANSLATION INITIATION FACTOR 6"/>
    <property type="match status" value="1"/>
</dbReference>
<dbReference type="Pfam" id="PF01912">
    <property type="entry name" value="eIF-6"/>
    <property type="match status" value="1"/>
</dbReference>
<dbReference type="PIRSF" id="PIRSF006413">
    <property type="entry name" value="IF-6"/>
    <property type="match status" value="1"/>
</dbReference>
<dbReference type="SMART" id="SM00654">
    <property type="entry name" value="eIF6"/>
    <property type="match status" value="1"/>
</dbReference>
<dbReference type="SUPFAM" id="SSF55909">
    <property type="entry name" value="Pentein"/>
    <property type="match status" value="1"/>
</dbReference>
<protein>
    <recommendedName>
        <fullName evidence="1">Translation initiation factor 6</fullName>
        <shortName evidence="1">aIF-6</shortName>
    </recommendedName>
</protein>
<keyword id="KW-0396">Initiation factor</keyword>
<keyword id="KW-0648">Protein biosynthesis</keyword>
<feature type="chain" id="PRO_0000259428" description="Translation initiation factor 6">
    <location>
        <begin position="1"/>
        <end position="217"/>
    </location>
</feature>
<sequence length="217" mass="22424">MIKTVNIYDNPVLGVFATCTEDVAIVPIGTAGKAIDLLAEQLDVKVISTLINGSIVVGSLSKGNSNGFLISRDANVSDLKDVEVPVEVLPDMLTAVGNVILANDTAALVHPEMTDSSIEVISRVLGVDVHRGTIAGLGTVGMAGVVTNRGLLVHPMVTPDELSVLEDVFALPIELGTTNYGSQAVGSGLLANSKGYVAGSNTTGHELGRVEDALFFA</sequence>
<organism>
    <name type="scientific">Methanococcoides burtonii (strain DSM 6242 / NBRC 107633 / OCM 468 / ACE-M)</name>
    <dbReference type="NCBI Taxonomy" id="259564"/>
    <lineage>
        <taxon>Archaea</taxon>
        <taxon>Methanobacteriati</taxon>
        <taxon>Methanobacteriota</taxon>
        <taxon>Stenosarchaea group</taxon>
        <taxon>Methanomicrobia</taxon>
        <taxon>Methanosarcinales</taxon>
        <taxon>Methanosarcinaceae</taxon>
        <taxon>Methanococcoides</taxon>
    </lineage>
</organism>
<gene>
    <name evidence="1" type="primary">eif6</name>
    <name type="ordered locus">Mbur_0113</name>
</gene>
<proteinExistence type="inferred from homology"/>
<name>IF6_METBU</name>
<evidence type="ECO:0000255" key="1">
    <source>
        <dbReference type="HAMAP-Rule" id="MF_00032"/>
    </source>
</evidence>